<feature type="chain" id="PRO_1000085004" description="Acetyl-coenzyme A synthetase">
    <location>
        <begin position="1"/>
        <end position="650"/>
    </location>
</feature>
<feature type="binding site" evidence="1">
    <location>
        <begin position="191"/>
        <end position="194"/>
    </location>
    <ligand>
        <name>CoA</name>
        <dbReference type="ChEBI" id="CHEBI:57287"/>
    </ligand>
</feature>
<feature type="binding site" evidence="1">
    <location>
        <position position="311"/>
    </location>
    <ligand>
        <name>CoA</name>
        <dbReference type="ChEBI" id="CHEBI:57287"/>
    </ligand>
</feature>
<feature type="binding site" evidence="1">
    <location>
        <position position="335"/>
    </location>
    <ligand>
        <name>CoA</name>
        <dbReference type="ChEBI" id="CHEBI:57287"/>
    </ligand>
</feature>
<feature type="binding site" evidence="1">
    <location>
        <begin position="387"/>
        <end position="389"/>
    </location>
    <ligand>
        <name>ATP</name>
        <dbReference type="ChEBI" id="CHEBI:30616"/>
    </ligand>
</feature>
<feature type="binding site" evidence="1">
    <location>
        <begin position="411"/>
        <end position="416"/>
    </location>
    <ligand>
        <name>ATP</name>
        <dbReference type="ChEBI" id="CHEBI:30616"/>
    </ligand>
</feature>
<feature type="binding site" evidence="1">
    <location>
        <position position="500"/>
    </location>
    <ligand>
        <name>ATP</name>
        <dbReference type="ChEBI" id="CHEBI:30616"/>
    </ligand>
</feature>
<feature type="binding site" evidence="1">
    <location>
        <position position="515"/>
    </location>
    <ligand>
        <name>ATP</name>
        <dbReference type="ChEBI" id="CHEBI:30616"/>
    </ligand>
</feature>
<feature type="binding site" evidence="1">
    <location>
        <position position="523"/>
    </location>
    <ligand>
        <name>CoA</name>
        <dbReference type="ChEBI" id="CHEBI:57287"/>
    </ligand>
</feature>
<feature type="binding site" evidence="1">
    <location>
        <position position="526"/>
    </location>
    <ligand>
        <name>ATP</name>
        <dbReference type="ChEBI" id="CHEBI:30616"/>
    </ligand>
</feature>
<feature type="binding site" evidence="1">
    <location>
        <position position="537"/>
    </location>
    <ligand>
        <name>Mg(2+)</name>
        <dbReference type="ChEBI" id="CHEBI:18420"/>
    </ligand>
</feature>
<feature type="binding site" evidence="1">
    <location>
        <position position="539"/>
    </location>
    <ligand>
        <name>Mg(2+)</name>
        <dbReference type="ChEBI" id="CHEBI:18420"/>
    </ligand>
</feature>
<feature type="binding site" evidence="1">
    <location>
        <position position="542"/>
    </location>
    <ligand>
        <name>Mg(2+)</name>
        <dbReference type="ChEBI" id="CHEBI:18420"/>
    </ligand>
</feature>
<feature type="binding site" evidence="1">
    <location>
        <position position="584"/>
    </location>
    <ligand>
        <name>CoA</name>
        <dbReference type="ChEBI" id="CHEBI:57287"/>
    </ligand>
</feature>
<feature type="modified residue" description="N6-acetyllysine" evidence="1">
    <location>
        <position position="609"/>
    </location>
</feature>
<proteinExistence type="inferred from homology"/>
<sequence>MSTQSLYKVPSEIAANALVNDEQYKKMYQESIVNPEGFWREHGNRIDWIKPFTKVKKTSFDDHNLFIKWFYDGTLNASANCLDRHLENNADKLAIIWEGDDAKDQRTLTYGQLHTQVCKFANALRSQGVRRGDVVTIYMPMVPEAAVAMLACARIGAIHSVVFGGFSPDSIASRVIDGNSKVVITADEGVRAGRIIPLKANIDEALSHPDVNCVEKVIVMKRTGGDINWVEGRDIWWDSLMDTASEHCIAEEMGAEDPLFLLYTSGSTGNPKGVLHTTGGYMVYAAMTHEYVFDYKENEVYWCTADVGWITGHSYMVYGPLANGATVLIHEGVPNYPSPARLGEMVDRHKVNILYTAPTLIRALMAEGKEQFAGFDGSSLRIMGSVGEPINPEAWRWYNDVIGHEKCPIVDTWWQTETGGILISPLPGATDTKPGSATRPFFGVQPALVDNMGNIVDGASEGNLVILDSWPGQMRTVFGDHDRFVLTYFKTFRGMYFTGDGAKRDEDGYYWITGRVDDVINVSGHRLGTAEVESALVAHEFVAEAAVVGYPHDIKGQGIYAYVTLTKGSVETEELRQELRQWVRKEIGALATPDLIQWAGGLPKTRSGKIMRRFLRKIAANEVSNLGDSSTLADPAVIDTLIETRLNRSE</sequence>
<keyword id="KW-0007">Acetylation</keyword>
<keyword id="KW-0067">ATP-binding</keyword>
<keyword id="KW-0436">Ligase</keyword>
<keyword id="KW-0460">Magnesium</keyword>
<keyword id="KW-0479">Metal-binding</keyword>
<keyword id="KW-0547">Nucleotide-binding</keyword>
<name>ACSA_SHEHH</name>
<accession>B0TPY4</accession>
<comment type="function">
    <text evidence="1">Catalyzes the conversion of acetate into acetyl-CoA (AcCoA), an essential intermediate at the junction of anabolic and catabolic pathways. AcsA undergoes a two-step reaction. In the first half reaction, AcsA combines acetate with ATP to form acetyl-adenylate (AcAMP) intermediate. In the second half reaction, it can then transfer the acetyl group from AcAMP to the sulfhydryl group of CoA, forming the product AcCoA.</text>
</comment>
<comment type="catalytic activity">
    <reaction evidence="1">
        <text>acetate + ATP + CoA = acetyl-CoA + AMP + diphosphate</text>
        <dbReference type="Rhea" id="RHEA:23176"/>
        <dbReference type="ChEBI" id="CHEBI:30089"/>
        <dbReference type="ChEBI" id="CHEBI:30616"/>
        <dbReference type="ChEBI" id="CHEBI:33019"/>
        <dbReference type="ChEBI" id="CHEBI:57287"/>
        <dbReference type="ChEBI" id="CHEBI:57288"/>
        <dbReference type="ChEBI" id="CHEBI:456215"/>
        <dbReference type="EC" id="6.2.1.1"/>
    </reaction>
</comment>
<comment type="cofactor">
    <cofactor evidence="1">
        <name>Mg(2+)</name>
        <dbReference type="ChEBI" id="CHEBI:18420"/>
    </cofactor>
</comment>
<comment type="PTM">
    <text evidence="1">Acetylated. Deacetylation by the SIR2-homolog deacetylase activates the enzyme.</text>
</comment>
<comment type="similarity">
    <text evidence="1">Belongs to the ATP-dependent AMP-binding enzyme family.</text>
</comment>
<dbReference type="EC" id="6.2.1.1" evidence="1"/>
<dbReference type="EMBL" id="CP000931">
    <property type="protein sequence ID" value="ABZ76263.1"/>
    <property type="molecule type" value="Genomic_DNA"/>
</dbReference>
<dbReference type="RefSeq" id="WP_012276800.1">
    <property type="nucleotide sequence ID" value="NC_010334.1"/>
</dbReference>
<dbReference type="SMR" id="B0TPY4"/>
<dbReference type="STRING" id="458817.Shal_1697"/>
<dbReference type="KEGG" id="shl:Shal_1697"/>
<dbReference type="eggNOG" id="COG0365">
    <property type="taxonomic scope" value="Bacteria"/>
</dbReference>
<dbReference type="HOGENOM" id="CLU_000022_3_6_6"/>
<dbReference type="OrthoDB" id="9803968at2"/>
<dbReference type="Proteomes" id="UP000001317">
    <property type="component" value="Chromosome"/>
</dbReference>
<dbReference type="GO" id="GO:0005829">
    <property type="term" value="C:cytosol"/>
    <property type="evidence" value="ECO:0007669"/>
    <property type="project" value="TreeGrafter"/>
</dbReference>
<dbReference type="GO" id="GO:0003987">
    <property type="term" value="F:acetate-CoA ligase activity"/>
    <property type="evidence" value="ECO:0007669"/>
    <property type="project" value="UniProtKB-UniRule"/>
</dbReference>
<dbReference type="GO" id="GO:0016208">
    <property type="term" value="F:AMP binding"/>
    <property type="evidence" value="ECO:0007669"/>
    <property type="project" value="InterPro"/>
</dbReference>
<dbReference type="GO" id="GO:0005524">
    <property type="term" value="F:ATP binding"/>
    <property type="evidence" value="ECO:0007669"/>
    <property type="project" value="UniProtKB-KW"/>
</dbReference>
<dbReference type="GO" id="GO:0046872">
    <property type="term" value="F:metal ion binding"/>
    <property type="evidence" value="ECO:0007669"/>
    <property type="project" value="UniProtKB-KW"/>
</dbReference>
<dbReference type="GO" id="GO:0019427">
    <property type="term" value="P:acetyl-CoA biosynthetic process from acetate"/>
    <property type="evidence" value="ECO:0007669"/>
    <property type="project" value="InterPro"/>
</dbReference>
<dbReference type="CDD" id="cd05966">
    <property type="entry name" value="ACS"/>
    <property type="match status" value="1"/>
</dbReference>
<dbReference type="FunFam" id="3.30.300.30:FF:000004">
    <property type="entry name" value="Acetyl-coenzyme A synthetase"/>
    <property type="match status" value="1"/>
</dbReference>
<dbReference type="FunFam" id="3.40.50.12780:FF:000001">
    <property type="entry name" value="Acetyl-coenzyme A synthetase"/>
    <property type="match status" value="1"/>
</dbReference>
<dbReference type="Gene3D" id="3.30.300.30">
    <property type="match status" value="1"/>
</dbReference>
<dbReference type="Gene3D" id="3.40.50.12780">
    <property type="entry name" value="N-terminal domain of ligase-like"/>
    <property type="match status" value="1"/>
</dbReference>
<dbReference type="HAMAP" id="MF_01123">
    <property type="entry name" value="Ac_CoA_synth"/>
    <property type="match status" value="1"/>
</dbReference>
<dbReference type="InterPro" id="IPR011904">
    <property type="entry name" value="Ac_CoA_lig"/>
</dbReference>
<dbReference type="InterPro" id="IPR032387">
    <property type="entry name" value="ACAS_N"/>
</dbReference>
<dbReference type="InterPro" id="IPR025110">
    <property type="entry name" value="AMP-bd_C"/>
</dbReference>
<dbReference type="InterPro" id="IPR045851">
    <property type="entry name" value="AMP-bd_C_sf"/>
</dbReference>
<dbReference type="InterPro" id="IPR020845">
    <property type="entry name" value="AMP-binding_CS"/>
</dbReference>
<dbReference type="InterPro" id="IPR000873">
    <property type="entry name" value="AMP-dep_synth/lig_dom"/>
</dbReference>
<dbReference type="InterPro" id="IPR042099">
    <property type="entry name" value="ANL_N_sf"/>
</dbReference>
<dbReference type="NCBIfam" id="TIGR02188">
    <property type="entry name" value="Ac_CoA_lig_AcsA"/>
    <property type="match status" value="1"/>
</dbReference>
<dbReference type="NCBIfam" id="NF001208">
    <property type="entry name" value="PRK00174.1"/>
    <property type="match status" value="1"/>
</dbReference>
<dbReference type="PANTHER" id="PTHR24095">
    <property type="entry name" value="ACETYL-COENZYME A SYNTHETASE"/>
    <property type="match status" value="1"/>
</dbReference>
<dbReference type="PANTHER" id="PTHR24095:SF243">
    <property type="entry name" value="ACETYL-COENZYME A SYNTHETASE"/>
    <property type="match status" value="1"/>
</dbReference>
<dbReference type="Pfam" id="PF16177">
    <property type="entry name" value="ACAS_N"/>
    <property type="match status" value="1"/>
</dbReference>
<dbReference type="Pfam" id="PF00501">
    <property type="entry name" value="AMP-binding"/>
    <property type="match status" value="1"/>
</dbReference>
<dbReference type="Pfam" id="PF13193">
    <property type="entry name" value="AMP-binding_C"/>
    <property type="match status" value="1"/>
</dbReference>
<dbReference type="SUPFAM" id="SSF56801">
    <property type="entry name" value="Acetyl-CoA synthetase-like"/>
    <property type="match status" value="1"/>
</dbReference>
<dbReference type="PROSITE" id="PS00455">
    <property type="entry name" value="AMP_BINDING"/>
    <property type="match status" value="1"/>
</dbReference>
<gene>
    <name evidence="1" type="primary">acsA</name>
    <name type="ordered locus">Shal_1697</name>
</gene>
<organism>
    <name type="scientific">Shewanella halifaxensis (strain HAW-EB4)</name>
    <dbReference type="NCBI Taxonomy" id="458817"/>
    <lineage>
        <taxon>Bacteria</taxon>
        <taxon>Pseudomonadati</taxon>
        <taxon>Pseudomonadota</taxon>
        <taxon>Gammaproteobacteria</taxon>
        <taxon>Alteromonadales</taxon>
        <taxon>Shewanellaceae</taxon>
        <taxon>Shewanella</taxon>
    </lineage>
</organism>
<evidence type="ECO:0000255" key="1">
    <source>
        <dbReference type="HAMAP-Rule" id="MF_01123"/>
    </source>
</evidence>
<reference key="1">
    <citation type="submission" date="2008-01" db="EMBL/GenBank/DDBJ databases">
        <title>Complete sequence of Shewanella halifaxensis HAW-EB4.</title>
        <authorList>
            <consortium name="US DOE Joint Genome Institute"/>
            <person name="Copeland A."/>
            <person name="Lucas S."/>
            <person name="Lapidus A."/>
            <person name="Glavina del Rio T."/>
            <person name="Dalin E."/>
            <person name="Tice H."/>
            <person name="Bruce D."/>
            <person name="Goodwin L."/>
            <person name="Pitluck S."/>
            <person name="Sims D."/>
            <person name="Brettin T."/>
            <person name="Detter J.C."/>
            <person name="Han C."/>
            <person name="Kuske C.R."/>
            <person name="Schmutz J."/>
            <person name="Larimer F."/>
            <person name="Land M."/>
            <person name="Hauser L."/>
            <person name="Kyrpides N."/>
            <person name="Kim E."/>
            <person name="Zhao J.-S."/>
            <person name="Richardson P."/>
        </authorList>
    </citation>
    <scope>NUCLEOTIDE SEQUENCE [LARGE SCALE GENOMIC DNA]</scope>
    <source>
        <strain>HAW-EB4</strain>
    </source>
</reference>
<protein>
    <recommendedName>
        <fullName evidence="1">Acetyl-coenzyme A synthetase</fullName>
        <shortName evidence="1">AcCoA synthetase</shortName>
        <shortName evidence="1">Acs</shortName>
        <ecNumber evidence="1">6.2.1.1</ecNumber>
    </recommendedName>
    <alternativeName>
        <fullName evidence="1">Acetate--CoA ligase</fullName>
    </alternativeName>
    <alternativeName>
        <fullName evidence="1">Acyl-activating enzyme</fullName>
    </alternativeName>
</protein>